<organism>
    <name type="scientific">Arabis mosaic virus (isolate NW)</name>
    <name type="common">ArMV</name>
    <dbReference type="NCBI Taxonomy" id="282063"/>
    <lineage>
        <taxon>Viruses</taxon>
        <taxon>Riboviria</taxon>
        <taxon>Orthornavirae</taxon>
        <taxon>Pisuviricota</taxon>
        <taxon>Pisoniviricetes</taxon>
        <taxon>Picornavirales</taxon>
        <taxon>Secoviridae</taxon>
        <taxon>Comovirinae</taxon>
        <taxon>Nepovirus</taxon>
        <taxon>Nepovirus arabis</taxon>
    </lineage>
</organism>
<protein>
    <recommendedName>
        <fullName>RNA2 polyprotein</fullName>
    </recommendedName>
    <alternativeName>
        <fullName>P2</fullName>
    </alternativeName>
    <component>
        <recommendedName>
            <fullName>Protein 2A</fullName>
            <shortName>P2A</shortName>
        </recommendedName>
    </component>
    <component>
        <recommendedName>
            <fullName>Movement protein</fullName>
        </recommendedName>
        <alternativeName>
            <fullName>2B-MP</fullName>
        </alternativeName>
    </component>
    <component>
        <recommendedName>
            <fullName>Coat protein</fullName>
        </recommendedName>
        <alternativeName>
            <fullName>2C-CP</fullName>
        </alternativeName>
    </component>
</protein>
<name>POL2_ARMVN</name>
<reference key="1">
    <citation type="journal article" date="2001" name="Virus Res.">
        <title>Complete nucleotide sequences of the RNAs 2 of German isolates of Grapevine fanleaf and Arabis mosaic nepoviruses.</title>
        <authorList>
            <person name="Wetzel T."/>
            <person name="Meunier L."/>
            <person name="Jaeger U."/>
            <person name="Reustle G.M."/>
            <person name="Krczal G."/>
        </authorList>
    </citation>
    <scope>NUCLEOTIDE SEQUENCE [GENOMIC RNA]</scope>
</reference>
<feature type="chain" id="PRO_0000037094" description="Protein 2A" evidence="1">
    <location>
        <begin position="1"/>
        <end position="259"/>
    </location>
</feature>
<feature type="chain" id="PRO_0000037095" description="Movement protein" evidence="1">
    <location>
        <begin position="260"/>
        <end position="605"/>
    </location>
</feature>
<feature type="chain" id="PRO_0000037096" description="Coat protein" evidence="1">
    <location>
        <begin position="606"/>
        <end position="1110"/>
    </location>
</feature>
<feature type="region of interest" description="Disordered" evidence="2">
    <location>
        <begin position="195"/>
        <end position="215"/>
    </location>
</feature>
<feature type="compositionally biased region" description="Pro residues" evidence="2">
    <location>
        <begin position="200"/>
        <end position="213"/>
    </location>
</feature>
<organismHost>
    <name type="scientific">Vitis vinifera</name>
    <name type="common">Grape</name>
    <dbReference type="NCBI Taxonomy" id="29760"/>
</organismHost>
<accession>Q91HK4</accession>
<dbReference type="EMBL" id="AY017339">
    <property type="protein sequence ID" value="AAK07728.1"/>
    <property type="molecule type" value="Genomic_RNA"/>
</dbReference>
<dbReference type="RefSeq" id="YP_053924.1">
    <property type="nucleotide sequence ID" value="NC_006056.1"/>
</dbReference>
<dbReference type="SMR" id="Q91HK4"/>
<dbReference type="GeneID" id="2943103"/>
<dbReference type="KEGG" id="vg:2943103"/>
<dbReference type="Proteomes" id="UP000007441">
    <property type="component" value="Genome"/>
</dbReference>
<dbReference type="GO" id="GO:0044219">
    <property type="term" value="C:host cell plasmodesma"/>
    <property type="evidence" value="ECO:0007669"/>
    <property type="project" value="UniProtKB-SubCell"/>
</dbReference>
<dbReference type="GO" id="GO:0019028">
    <property type="term" value="C:viral capsid"/>
    <property type="evidence" value="ECO:0007669"/>
    <property type="project" value="UniProtKB-KW"/>
</dbReference>
<dbReference type="GO" id="GO:0005198">
    <property type="term" value="F:structural molecule activity"/>
    <property type="evidence" value="ECO:0007669"/>
    <property type="project" value="InterPro"/>
</dbReference>
<dbReference type="GO" id="GO:0046740">
    <property type="term" value="P:transport of virus in host, cell to cell"/>
    <property type="evidence" value="ECO:0007669"/>
    <property type="project" value="UniProtKB-KW"/>
</dbReference>
<dbReference type="Gene3D" id="2.60.120.20">
    <property type="match status" value="2"/>
</dbReference>
<dbReference type="InterPro" id="IPR005054">
    <property type="entry name" value="Nepo_coat"/>
</dbReference>
<dbReference type="InterPro" id="IPR005305">
    <property type="entry name" value="Nepo_coat_C"/>
</dbReference>
<dbReference type="InterPro" id="IPR005306">
    <property type="entry name" value="Nepo_coat_N"/>
</dbReference>
<dbReference type="InterPro" id="IPR021081">
    <property type="entry name" value="Nepovirus_subgr_A_2A"/>
</dbReference>
<dbReference type="InterPro" id="IPR029053">
    <property type="entry name" value="Viral_coat"/>
</dbReference>
<dbReference type="Pfam" id="PF12312">
    <property type="entry name" value="NeA_P2"/>
    <property type="match status" value="1"/>
</dbReference>
<dbReference type="Pfam" id="PF03391">
    <property type="entry name" value="Nepo_coat"/>
    <property type="match status" value="1"/>
</dbReference>
<dbReference type="Pfam" id="PF03688">
    <property type="entry name" value="Nepo_coat_C"/>
    <property type="match status" value="1"/>
</dbReference>
<dbReference type="Pfam" id="PF03689">
    <property type="entry name" value="Nepo_coat_N"/>
    <property type="match status" value="1"/>
</dbReference>
<dbReference type="SUPFAM" id="SSF88633">
    <property type="entry name" value="Positive stranded ssRNA viruses"/>
    <property type="match status" value="3"/>
</dbReference>
<keyword id="KW-0167">Capsid protein</keyword>
<keyword id="KW-1031">Host cell junction</keyword>
<keyword id="KW-0813">Transport</keyword>
<keyword id="KW-0916">Viral movement protein</keyword>
<keyword id="KW-0946">Virion</keyword>
<sequence length="1110" mass="122186">MAKFYYSDRRLACWAAGKNPHLGGSIESWLAAIKSDSSFRQTVKEDVQVNRLQPTAVRMFSWKVGSGPIDNPEKCNWHYVLTGEVPAQPTEPVKAREVVVPPVKVIPSPPPVPRPYFRPVGAFAPTRSGFIRATVERLSRKREESRAAALFAELPLEYPQGAPLVVPRGFAAMRWTYHATWRRWYDASDERALRVHPGGPALPPPPPPPPIQKPPSFEERLQAALERQSCARAFALETSLGLNMAWLGTAAIPSTSVCCADGRTTGGQTIAQEADPINHRVTSNTAPGRAQWISERRSALRRREQANSLQSLAAQTDMTFEQARNAYLGAADMVEQGLPLLPPLRNAYAPRGLWRGPSTRANYTLDFRLNGIPTGQNTLEILYNPVADEEMDEYRDRGMSAVVIDALEIAINPFGMPGNPTDLTVVATYGHERNMERAFIGSSSTFLGNGLARAIFFPGLQYSQEEPRRESIIRLYVASTNATVDADSILAAISVGTLRQHIGSLHNRTVASSVHAAQVQGTTLRATMMGNAVVVSPEGSLVTGTPEANVQIGSGSSMRMVGPLAWENVEEPGQTFTIRNRSRSMRVDRNADVGVALPRMSTTTRGLAGRGSVQVPKDCQAGRYLKTLDLRDMVSGFSGIQYEKWITAGLVMPDFKVVIRYPANAFTGITWVMSFDAYNRITSSITTTASPAYTLSVPHWLLHHKNGTTSCDIDYGELCGHAMWFNATTFESPKLHFTCLTGNNKELAADWEFVVELYAEFEAAKTFLGRPNFVYSADAFNGSFKFLTIPPLEYDLSTTSAYKSVSLLLGQTLIDGTHKVYNYNNTLLSYYLGIGGVVKGRVHICSPCTYGIVLRVVSEWNGVTNNWNQLFKYPGCYIGEDGNFEIEIRSPYHRTPLRLLDAQAASAFTSTLNFYAISGPIAPSGETAKMPVVVQIDEIALPDLSVPSFPNDYFLWVDFSAFTVDAEEYVIGSRFFDISSTTSTVHLGDNPFAHMIACHGLHHGILDLKLMWDLEGEFGKSSGGVTITKLCGDKATGMDGASRVCALQNMGCETELYIGNFAGANPNSALSLYSRWLAIKLDKARSMKMLRILCKPRGNFEFYGRTCFRV</sequence>
<proteinExistence type="inferred from homology"/>
<evidence type="ECO:0000250" key="1"/>
<evidence type="ECO:0000256" key="2">
    <source>
        <dbReference type="SAM" id="MobiDB-lite"/>
    </source>
</evidence>
<evidence type="ECO:0000305" key="3"/>
<comment type="function">
    <molecule>Protein 2A</molecule>
    <text evidence="1">Implicated in RNA2 replication. Could also be required for nematode transmission of the virus (By similarity).</text>
</comment>
<comment type="function">
    <molecule>Movement protein</molecule>
    <text evidence="1">Transports viral genome to neighboring plant cells directly through plasmosdesmata, without any budding. The movement protein allows efficient cell to cell propagation, by bypassing the host cell wall barrier. Acts by forming a tubular structure at the host plasmodesmata, enlarging it enough to allow free passage of virion capsids (By similarity).</text>
</comment>
<comment type="subcellular location">
    <molecule>Movement protein</molecule>
    <subcellularLocation>
        <location evidence="1">Host cell junction</location>
        <location evidence="1">Host plasmodesma</location>
    </subcellularLocation>
    <text evidence="1">Assembles in tubules that are embedded within modified plasmodesmata.</text>
</comment>
<comment type="subcellular location">
    <molecule>Coat protein</molecule>
    <subcellularLocation>
        <location evidence="3">Virion</location>
    </subcellularLocation>
</comment>
<comment type="PTM">
    <text evidence="1">Specific enzymatic cleavages in vivo by the P1 encoded 3C-like protease yield mature proteins.</text>
</comment>
<comment type="miscellaneous">
    <text>Virions are comprised of 60 copies of the coat protein.</text>
</comment>
<comment type="similarity">
    <text evidence="3">Belongs to the nepoviruses RNA2 polyprotein family.</text>
</comment>